<feature type="chain" id="PRO_0000446423" description="Tabersonine synthase">
    <location>
        <begin position="1"/>
        <end position="320"/>
    </location>
</feature>
<feature type="short sequence motif" description="Involved in the stabilization of the negatively charged intermediate by the formation of the oxyanion hole" evidence="2">
    <location>
        <begin position="78"/>
        <end position="80"/>
    </location>
</feature>
<feature type="active site" description="Proton acceptor" evidence="12">
    <location>
        <position position="170"/>
    </location>
</feature>
<feature type="active site" evidence="12">
    <location>
        <position position="266"/>
    </location>
</feature>
<feature type="active site" description="Proton donor/acceptor" evidence="12">
    <location>
        <position position="297"/>
    </location>
</feature>
<feature type="binding site" evidence="1">
    <location>
        <position position="81"/>
    </location>
    <ligand>
        <name>(-)-tabersonine</name>
        <dbReference type="ChEBI" id="CHEBI:57893"/>
    </ligand>
</feature>
<feature type="binding site" evidence="1">
    <location>
        <position position="297"/>
    </location>
    <ligand>
        <name>(-)-tabersonine</name>
        <dbReference type="ChEBI" id="CHEBI:57893"/>
    </ligand>
</feature>
<feature type="mutagenesis site" description="Abolished activity." evidence="6">
    <original>Y</original>
    <variation>F</variation>
    <location>
        <position position="76"/>
    </location>
</feature>
<feature type="mutagenesis site" description="Reduced activity but acquired ability to produce catharanthine." evidence="6">
    <original>H</original>
    <variation>A</variation>
    <location>
        <position position="78"/>
    </location>
</feature>
<feature type="mutagenesis site" description="Strongly reduced activity." evidence="6">
    <original>H</original>
    <variation>N</variation>
    <location>
        <position position="78"/>
    </location>
</feature>
<feature type="mutagenesis site" description="Abolished activity." evidence="6">
    <original>D</original>
    <variation>A</variation>
    <variation>N</variation>
    <location>
        <position position="169"/>
    </location>
</feature>
<feature type="mutagenesis site" description="Strongly reduced activity but acquired ability to produce catharanthine." evidence="6">
    <original>S</original>
    <variation>A</variation>
    <location>
        <position position="170"/>
    </location>
</feature>
<feature type="mutagenesis site" description="Normal activity." evidence="6">
    <original>S</original>
    <variation>C</variation>
    <location>
        <position position="170"/>
    </location>
</feature>
<feature type="mutagenesis site" description="Strongly reduced activity." evidence="6">
    <original>T</original>
    <variation>P</variation>
    <location>
        <position position="171"/>
    </location>
</feature>
<feature type="mutagenesis site" description="Normal activity." evidence="6">
    <original>Y</original>
    <variation>F</variation>
    <location>
        <position position="202"/>
    </location>
</feature>
<feature type="mutagenesis site" description="Abolished activity." evidence="6">
    <original>Y</original>
    <variation>D</variation>
    <variation>F</variation>
    <location>
        <position position="216"/>
    </location>
</feature>
<feature type="mutagenesis site" description="Normal activity." evidence="6">
    <original>Y</original>
    <variation>F</variation>
    <location>
        <position position="224"/>
    </location>
</feature>
<feature type="mutagenesis site" description="Reduced activity." evidence="6">
    <original>D</original>
    <variation>A</variation>
    <location>
        <position position="266"/>
    </location>
</feature>
<feature type="mutagenesis site" description="Normal activity." evidence="6">
    <original>D</original>
    <variation>N</variation>
    <location>
        <position position="266"/>
    </location>
</feature>
<feature type="mutagenesis site" description="Normal activity." evidence="6">
    <original>Y</original>
    <variation>F</variation>
    <location>
        <position position="297"/>
    </location>
</feature>
<feature type="strand" evidence="14">
    <location>
        <begin position="7"/>
        <end position="11"/>
    </location>
</feature>
<feature type="turn" evidence="14">
    <location>
        <begin position="12"/>
        <end position="14"/>
    </location>
</feature>
<feature type="strand" evidence="14">
    <location>
        <begin position="15"/>
        <end position="18"/>
    </location>
</feature>
<feature type="strand" evidence="14">
    <location>
        <begin position="23"/>
        <end position="25"/>
    </location>
</feature>
<feature type="strand" evidence="14">
    <location>
        <begin position="35"/>
        <end position="37"/>
    </location>
</feature>
<feature type="turn" evidence="14">
    <location>
        <begin position="39"/>
        <end position="42"/>
    </location>
</feature>
<feature type="strand" evidence="14">
    <location>
        <begin position="45"/>
        <end position="54"/>
    </location>
</feature>
<feature type="strand" evidence="14">
    <location>
        <begin position="56"/>
        <end position="61"/>
    </location>
</feature>
<feature type="strand" evidence="14">
    <location>
        <begin position="71"/>
        <end position="77"/>
    </location>
</feature>
<feature type="turn" evidence="14">
    <location>
        <begin position="81"/>
        <end position="83"/>
    </location>
</feature>
<feature type="helix" evidence="14">
    <location>
        <begin position="90"/>
        <end position="103"/>
    </location>
</feature>
<feature type="strand" evidence="14">
    <location>
        <begin position="106"/>
        <end position="111"/>
    </location>
</feature>
<feature type="turn" evidence="14">
    <location>
        <begin position="115"/>
        <end position="117"/>
    </location>
</feature>
<feature type="helix" evidence="14">
    <location>
        <begin position="122"/>
        <end position="135"/>
    </location>
</feature>
<feature type="turn" evidence="14">
    <location>
        <begin position="136"/>
        <end position="139"/>
    </location>
</feature>
<feature type="helix" evidence="14">
    <location>
        <begin position="142"/>
        <end position="146"/>
    </location>
</feature>
<feature type="helix" evidence="14">
    <location>
        <begin position="153"/>
        <end position="158"/>
    </location>
</feature>
<feature type="strand" evidence="14">
    <location>
        <begin position="159"/>
        <end position="169"/>
    </location>
</feature>
<feature type="helix" evidence="14">
    <location>
        <begin position="170"/>
        <end position="183"/>
    </location>
</feature>
<feature type="helix" evidence="14">
    <location>
        <begin position="188"/>
        <end position="191"/>
    </location>
</feature>
<feature type="strand" evidence="14">
    <location>
        <begin position="197"/>
        <end position="202"/>
    </location>
</feature>
<feature type="helix" evidence="14">
    <location>
        <begin position="215"/>
        <end position="218"/>
    </location>
</feature>
<feature type="helix" evidence="14">
    <location>
        <begin position="220"/>
        <end position="228"/>
    </location>
</feature>
<feature type="helix" evidence="14">
    <location>
        <begin position="235"/>
        <end position="237"/>
    </location>
</feature>
<feature type="turn" evidence="14">
    <location>
        <begin position="239"/>
        <end position="241"/>
    </location>
</feature>
<feature type="helix" evidence="14">
    <location>
        <begin position="251"/>
        <end position="253"/>
    </location>
</feature>
<feature type="strand" evidence="14">
    <location>
        <begin position="257"/>
        <end position="263"/>
    </location>
</feature>
<feature type="helix" evidence="14">
    <location>
        <begin position="268"/>
        <end position="282"/>
    </location>
</feature>
<feature type="strand" evidence="14">
    <location>
        <begin position="286"/>
        <end position="292"/>
    </location>
</feature>
<feature type="helix" evidence="14">
    <location>
        <begin position="297"/>
        <end position="301"/>
    </location>
</feature>
<feature type="helix" evidence="14">
    <location>
        <begin position="306"/>
        <end position="316"/>
    </location>
</feature>
<protein>
    <recommendedName>
        <fullName evidence="9">Tabersonine synthase</fullName>
        <ecNumber evidence="3 4 6 7">5.5.1.38</ecNumber>
    </recommendedName>
    <alternativeName>
        <fullName evidence="10">2-hydroxyisoflavanone dehydratase-like protein 3</fullName>
        <shortName evidence="10">CrHID3</shortName>
        <shortName evidence="10">HID-like protein 3</shortName>
    </alternativeName>
    <alternativeName>
        <fullName evidence="8">Hydrolase 2</fullName>
        <shortName evidence="8">CrHL2</shortName>
    </alternativeName>
</protein>
<dbReference type="EC" id="5.5.1.38" evidence="3 4 6 7"/>
<dbReference type="EMBL" id="MF770513">
    <property type="protein sequence ID" value="AVM85921.1"/>
    <property type="molecule type" value="mRNA"/>
</dbReference>
<dbReference type="PDB" id="6RS4">
    <property type="method" value="X-ray"/>
    <property type="resolution" value="1.30 A"/>
    <property type="chains" value="A/B=2-320"/>
</dbReference>
<dbReference type="PDBsum" id="6RS4"/>
<dbReference type="SMR" id="A0A2P1GIW3"/>
<dbReference type="ESTHER" id="catro-TS">
    <property type="family name" value="Plant_carboxylesterase"/>
</dbReference>
<dbReference type="KEGG" id="ag:AVM85921"/>
<dbReference type="OrthoDB" id="408631at2759"/>
<dbReference type="BioCyc" id="MetaCyc:MONOMER-20643"/>
<dbReference type="GO" id="GO:0005829">
    <property type="term" value="C:cytosol"/>
    <property type="evidence" value="ECO:0000314"/>
    <property type="project" value="UniProtKB"/>
</dbReference>
<dbReference type="GO" id="GO:0005634">
    <property type="term" value="C:nucleus"/>
    <property type="evidence" value="ECO:0000314"/>
    <property type="project" value="UniProtKB"/>
</dbReference>
<dbReference type="GO" id="GO:0016787">
    <property type="term" value="F:hydrolase activity"/>
    <property type="evidence" value="ECO:0007669"/>
    <property type="project" value="InterPro"/>
</dbReference>
<dbReference type="GO" id="GO:0016853">
    <property type="term" value="F:isomerase activity"/>
    <property type="evidence" value="ECO:0000314"/>
    <property type="project" value="UniProtKB"/>
</dbReference>
<dbReference type="GO" id="GO:0016829">
    <property type="term" value="F:lyase activity"/>
    <property type="evidence" value="ECO:0007669"/>
    <property type="project" value="UniProtKB-KW"/>
</dbReference>
<dbReference type="GO" id="GO:0009821">
    <property type="term" value="P:alkaloid biosynthetic process"/>
    <property type="evidence" value="ECO:0000314"/>
    <property type="project" value="UniProtKB"/>
</dbReference>
<dbReference type="GO" id="GO:0035834">
    <property type="term" value="P:indole alkaloid metabolic process"/>
    <property type="evidence" value="ECO:0000314"/>
    <property type="project" value="UniProtKB"/>
</dbReference>
<dbReference type="FunFam" id="3.40.50.1820:FF:000376">
    <property type="entry name" value="Probable carboxylesterase 12"/>
    <property type="match status" value="1"/>
</dbReference>
<dbReference type="Gene3D" id="3.40.50.1820">
    <property type="entry name" value="alpha/beta hydrolase"/>
    <property type="match status" value="1"/>
</dbReference>
<dbReference type="InterPro" id="IPR013094">
    <property type="entry name" value="AB_hydrolase_3"/>
</dbReference>
<dbReference type="InterPro" id="IPR029058">
    <property type="entry name" value="AB_hydrolase_fold"/>
</dbReference>
<dbReference type="InterPro" id="IPR050466">
    <property type="entry name" value="Carboxylest/Gibb_receptor"/>
</dbReference>
<dbReference type="PANTHER" id="PTHR23024:SF551">
    <property type="entry name" value="2-HYDROXYISOFLAVANONE DEHYDRATASE-LIKE"/>
    <property type="match status" value="1"/>
</dbReference>
<dbReference type="PANTHER" id="PTHR23024">
    <property type="entry name" value="ARYLACETAMIDE DEACETYLASE"/>
    <property type="match status" value="1"/>
</dbReference>
<dbReference type="Pfam" id="PF07859">
    <property type="entry name" value="Abhydrolase_3"/>
    <property type="match status" value="1"/>
</dbReference>
<dbReference type="SUPFAM" id="SSF53474">
    <property type="entry name" value="alpha/beta-Hydrolases"/>
    <property type="match status" value="1"/>
</dbReference>
<organism>
    <name type="scientific">Catharanthus roseus</name>
    <name type="common">Madagascar periwinkle</name>
    <name type="synonym">Vinca rosea</name>
    <dbReference type="NCBI Taxonomy" id="4058"/>
    <lineage>
        <taxon>Eukaryota</taxon>
        <taxon>Viridiplantae</taxon>
        <taxon>Streptophyta</taxon>
        <taxon>Embryophyta</taxon>
        <taxon>Tracheophyta</taxon>
        <taxon>Spermatophyta</taxon>
        <taxon>Magnoliopsida</taxon>
        <taxon>eudicotyledons</taxon>
        <taxon>Gunneridae</taxon>
        <taxon>Pentapetalae</taxon>
        <taxon>asterids</taxon>
        <taxon>lamiids</taxon>
        <taxon>Gentianales</taxon>
        <taxon>Apocynaceae</taxon>
        <taxon>Rauvolfioideae</taxon>
        <taxon>Vinceae</taxon>
        <taxon>Catharanthinae</taxon>
        <taxon>Catharanthus</taxon>
    </lineage>
</organism>
<proteinExistence type="evidence at protein level"/>
<reference key="1">
    <citation type="journal article" date="2018" name="Proc. Natl. Acad. Sci. U.S.A.">
        <title>Solution of the multistep pathway for assembly of corynanthean, strychnos, iboga, and aspidosperma monoterpenoid indole alkaloids from 19E-geissoschizine.</title>
        <authorList>
            <person name="Qu Y."/>
            <person name="Easson M.E.A.M."/>
            <person name="Simionescu R."/>
            <person name="Hajicek J."/>
            <person name="Thamm A.M.K."/>
            <person name="Salim V."/>
            <person name="De Luca V."/>
        </authorList>
    </citation>
    <scope>NUCLEOTIDE SEQUENCE [MRNA]</scope>
    <scope>FUNCTION</scope>
    <scope>DISRUPTION PHENOTYPE</scope>
    <scope>CATALYTIC ACTIVITY</scope>
    <scope>PATHWAY</scope>
</reference>
<reference key="2">
    <citation type="journal article" date="2019" name="Plant J.">
        <title>Completion of the canonical pathway for assembly of anticancer drugs vincristine/vinblastine in Catharanthus roseus.</title>
        <authorList>
            <person name="Qu Y."/>
            <person name="Safonova O."/>
            <person name="De Luca V."/>
        </authorList>
    </citation>
    <scope>TISSUE SPECIFICITY</scope>
    <source>
        <strain>cv. Little Delicata</strain>
    </source>
</reference>
<reference key="3">
    <citation type="journal article" date="2018" name="Science">
        <title>Missing enzymes in the biosynthesis of the anticancer drug vinblastine in Madagascar periwinkle.</title>
        <authorList>
            <person name="Caputi L."/>
            <person name="Franke J."/>
            <person name="Farrow S.C."/>
            <person name="Chung K."/>
            <person name="Payne R.M.E."/>
            <person name="Nguyen T.-D."/>
            <person name="Dang T.-T.T."/>
            <person name="Soares Teto Carqueijeiro I."/>
            <person name="Koudounas K."/>
            <person name="Duge de Bernonville T."/>
            <person name="Ameyaw B."/>
            <person name="Jones D.M."/>
            <person name="Vieira I.J.C."/>
            <person name="Courdavault V."/>
            <person name="O'Connor S.E."/>
        </authorList>
    </citation>
    <scope>FUNCTION</scope>
    <scope>DISRUPTION PHENOTYPE</scope>
    <scope>CATALYTIC ACTIVITY</scope>
    <scope>INTERACTION WITH DPAS</scope>
    <scope>SUBCELLULAR LOCATION</scope>
    <scope>PATHWAY</scope>
    <source>
        <strain>cv. Little Bright Eyes</strain>
    </source>
</reference>
<reference key="4">
    <citation type="journal article" date="2024" name="Proc. Natl. Acad. Sci. U.S.A.">
        <title>Evolution and diversification of carboxylesterase-like [4+2] cyclases in aspidosperma and iboga alkaloid biosynthesis.</title>
        <authorList>
            <person name="DeMars M.D. II"/>
            <person name="O'Connor S.E."/>
        </authorList>
    </citation>
    <scope>FUNCTION</scope>
    <scope>CATALYTIC ACTIVITY</scope>
    <scope>PATHWAY</scope>
</reference>
<reference evidence="13" key="5">
    <citation type="journal article" date="2020" name="Nat. Chem. Biol.">
        <title>Structural basis of cycloaddition in biosynthesis of iboga and aspidosperma alkaloids.</title>
        <authorList>
            <person name="Caputi L."/>
            <person name="Franke J."/>
            <person name="Bussey K."/>
            <person name="Farrow S.C."/>
            <person name="Vieira I.J.C."/>
            <person name="Stevenson C.E.M."/>
            <person name="Lawson D.M."/>
            <person name="O'Connor S.E."/>
        </authorList>
    </citation>
    <scope>X-RAY CRYSTALLOGRAPHY (1.30 ANGSTROMS) OF 2-320</scope>
    <scope>FUNCTION</scope>
    <scope>CATALYTIC ACTIVITY</scope>
    <scope>MUTAGENESIS OF TYR-76; HIS-78; ASP-169; SER-170; THR-171; TYR-202; TYR-216; TYR-224; ASP-266 AND TYR-297</scope>
    <scope>BIOPHYSICOCHEMICAL PROPERTIES</scope>
    <scope>ACTIVE SITES</scope>
    <scope>PATHWAY</scope>
</reference>
<keyword id="KW-0002">3D-structure</keyword>
<keyword id="KW-0017">Alkaloid metabolism</keyword>
<keyword id="KW-0963">Cytoplasm</keyword>
<keyword id="KW-0413">Isomerase</keyword>
<keyword id="KW-0456">Lyase</keyword>
<keyword id="KW-0539">Nucleus</keyword>
<evidence type="ECO:0000250" key="1">
    <source>
        <dbReference type="UniProtKB" id="A0A2P1GIW2"/>
    </source>
</evidence>
<evidence type="ECO:0000250" key="2">
    <source>
        <dbReference type="UniProtKB" id="Q5NUF3"/>
    </source>
</evidence>
<evidence type="ECO:0000269" key="3">
    <source>
    </source>
</evidence>
<evidence type="ECO:0000269" key="4">
    <source>
    </source>
</evidence>
<evidence type="ECO:0000269" key="5">
    <source>
    </source>
</evidence>
<evidence type="ECO:0000269" key="6">
    <source>
    </source>
</evidence>
<evidence type="ECO:0000269" key="7">
    <source>
    </source>
</evidence>
<evidence type="ECO:0000303" key="8">
    <source>
    </source>
</evidence>
<evidence type="ECO:0000303" key="9">
    <source>
    </source>
</evidence>
<evidence type="ECO:0000303" key="10">
    <source>
    </source>
</evidence>
<evidence type="ECO:0000305" key="11"/>
<evidence type="ECO:0000305" key="12">
    <source>
    </source>
</evidence>
<evidence type="ECO:0007744" key="13">
    <source>
        <dbReference type="PDB" id="6RS4"/>
    </source>
</evidence>
<evidence type="ECO:0007829" key="14">
    <source>
        <dbReference type="PDB" id="6RS4"/>
    </source>
</evidence>
<name>TS_CATRO</name>
<accession>A0A2P1GIW3</accession>
<gene>
    <name evidence="9" type="primary">TS</name>
    <name evidence="10" type="synonym">HID3</name>
    <name evidence="8" type="synonym">HL2</name>
</gene>
<comment type="function">
    <text evidence="3 4 6 7">Component of iboga and aspidosperma monoterpenoid indole alkaloids (MIAs, e.g. tabersonine and catharanthine) biosynthesis pathway from 19E-geissoschizine, psychoactive compounds likely to be used in the treatment of opioid dependence (PubMed:29511102, PubMed:29724909, PubMed:32066966, PubMed:38319969). Catalyzes the conversion of dehydrosecodine to tabersonine, a precursor of vindoline; this process starts with the conversion of dihydroprecondylocarpine acetate to dehydrosecodine (PubMed:29511102, PubMed:29724909, PubMed:32066966, PubMed:38319969).</text>
</comment>
<comment type="catalytic activity">
    <reaction evidence="4 6 7">
        <text>dehydrosecodine = (-)-tabersonine</text>
        <dbReference type="Rhea" id="RHEA:81307"/>
        <dbReference type="ChEBI" id="CHEBI:57893"/>
        <dbReference type="ChEBI" id="CHEBI:146237"/>
        <dbReference type="EC" id="5.5.1.38"/>
    </reaction>
    <physiologicalReaction direction="left-to-right" evidence="4 6 7">
        <dbReference type="Rhea" id="RHEA:81308"/>
    </physiologicalReaction>
</comment>
<comment type="catalytic activity">
    <reaction evidence="3 4 6">
        <text>dihydroprecondylocarpine acetate = (-)-tabersonine + acetate + H(+)</text>
        <dbReference type="Rhea" id="RHEA:58584"/>
        <dbReference type="ChEBI" id="CHEBI:15378"/>
        <dbReference type="ChEBI" id="CHEBI:30089"/>
        <dbReference type="ChEBI" id="CHEBI:57893"/>
        <dbReference type="ChEBI" id="CHEBI:142770"/>
    </reaction>
    <physiologicalReaction direction="left-to-right" evidence="3 4 6">
        <dbReference type="Rhea" id="RHEA:58585"/>
    </physiologicalReaction>
</comment>
<comment type="biophysicochemical properties">
    <phDependence>
        <text evidence="6">Optimum pH is 9.5.</text>
    </phDependence>
</comment>
<comment type="pathway">
    <text evidence="3 4 6 7">Alkaloid biosynthesis.</text>
</comment>
<comment type="subunit">
    <text evidence="4">Interacts with dehydroprecondylocarpine acetate synthase (DPAS).</text>
</comment>
<comment type="subcellular location">
    <subcellularLocation>
        <location evidence="4">Cytoplasm</location>
        <location evidence="4">Cytosol</location>
    </subcellularLocation>
    <subcellularLocation>
        <location evidence="4">Nucleus</location>
    </subcellularLocation>
</comment>
<comment type="tissue specificity">
    <text evidence="5">Expressed in leaf epidermis.</text>
</comment>
<comment type="disruption phenotype">
    <text evidence="3 4">Reduced accumulation of vindoline and tabersonine, increased biosynthesis of catharanthine, but normal levels of ajmalicine.</text>
</comment>
<comment type="similarity">
    <text evidence="11">Belongs to the 'GDXG' lipolytic enzyme family.</text>
</comment>
<sequence length="320" mass="36192">MGSSDETIFDLPPYIKVFKDGRVERLHSSPYVPPSLNDPETGGVSWKDVPISSVVSARIYLPKINNHDEKLPIIVYFHGAGFCLESAFKSFFHTYVKHFVAEAKAIAVSVEFRLAPENHLPAAYEDCWEALQWVASHVGLDISSLKTCIDKDPWIINYADFDRLYLWGDSTGANIVHNTLIRSGKEKLNGGKVKILGAILYYPYFLIRTSSKQSDYMENEYRSYWKLAYPDAPGGNDNPMINPTAENAPDLAGYGCSRLLISMVADEARDITLLYIDALEKSGWKGELDVADFDKQYFELFEMETEVAKNMLRRLASFIK</sequence>